<comment type="function">
    <text evidence="2">Catalyzes the dephosphorylation of L-phosphoserine to serine and inorganic phosphate. Is poorly or not active toward D-phosphoserine, DL-phosphothreonine, 3-phosphoglycerate, para-nitrophenylphosphate, and fructose-6-phosphate. Does not display phosphoglycerate mutase activity.</text>
</comment>
<comment type="catalytic activity">
    <reaction evidence="2">
        <text>O-phospho-L-serine + H2O = L-serine + phosphate</text>
        <dbReference type="Rhea" id="RHEA:21208"/>
        <dbReference type="ChEBI" id="CHEBI:15377"/>
        <dbReference type="ChEBI" id="CHEBI:33384"/>
        <dbReference type="ChEBI" id="CHEBI:43474"/>
        <dbReference type="ChEBI" id="CHEBI:57524"/>
        <dbReference type="EC" id="3.1.3.3"/>
    </reaction>
</comment>
<comment type="catalytic activity">
    <reaction evidence="2">
        <text>O-phospho-D-serine + H2O = D-serine + phosphate</text>
        <dbReference type="Rhea" id="RHEA:24873"/>
        <dbReference type="ChEBI" id="CHEBI:15377"/>
        <dbReference type="ChEBI" id="CHEBI:35247"/>
        <dbReference type="ChEBI" id="CHEBI:43474"/>
        <dbReference type="ChEBI" id="CHEBI:58680"/>
        <dbReference type="EC" id="3.1.3.3"/>
    </reaction>
</comment>
<comment type="activity regulation">
    <text evidence="2">Activity is not inhibited by EDTA in vitro, nor enhanced by the addition of Mg(2+).</text>
</comment>
<comment type="biophysicochemical properties">
    <kinetics>
        <KM>1.6 mM for O-phospho-L-serine</KM>
        <Vmax>56.0 umol/min/mg enzyme</Vmax>
        <text>Values are given for the homodimeric form of the protein.</text>
    </kinetics>
</comment>
<comment type="pathway">
    <text evidence="2">Amino-acid biosynthesis; L-serine biosynthesis; L-serine from 3-phospho-D-glycerate: step 3/3.</text>
</comment>
<comment type="subunit">
    <text evidence="2">Homodimer. Can also form a heterodimer with PspB.</text>
</comment>
<comment type="similarity">
    <text evidence="3">Belongs to the histidine phosphatase superfamily. Metal-independent phosphoserine phosphatase family.</text>
</comment>
<keyword id="KW-0002">3D-structure</keyword>
<keyword id="KW-0028">Amino-acid biosynthesis</keyword>
<keyword id="KW-0903">Direct protein sequencing</keyword>
<keyword id="KW-0378">Hydrolase</keyword>
<keyword id="KW-1185">Reference proteome</keyword>
<keyword id="KW-0718">Serine biosynthesis</keyword>
<gene>
    <name type="primary">pspA</name>
    <name type="synonym">pgmA</name>
    <name type="ordered locus">HTH_0103</name>
    <name type="ordered locus">Hydth_0104</name>
</gene>
<feature type="chain" id="PRO_0000416820" description="Phosphoserine phosphatase 1">
    <location>
        <begin position="1"/>
        <end position="211"/>
    </location>
</feature>
<feature type="active site" description="Tele-phosphohistidine intermediate" evidence="1">
    <location>
        <position position="9"/>
    </location>
</feature>
<feature type="active site" evidence="1">
    <location>
        <position position="150"/>
    </location>
</feature>
<feature type="site" description="Important for activity" evidence="1">
    <location>
        <position position="58"/>
    </location>
</feature>
<feature type="strand" evidence="4">
    <location>
        <begin position="2"/>
        <end position="8"/>
    </location>
</feature>
<feature type="turn" evidence="4">
    <location>
        <begin position="13"/>
        <end position="18"/>
    </location>
</feature>
<feature type="helix" evidence="4">
    <location>
        <begin position="30"/>
        <end position="43"/>
    </location>
</feature>
<feature type="strand" evidence="4">
    <location>
        <begin position="50"/>
        <end position="53"/>
    </location>
</feature>
<feature type="helix" evidence="4">
    <location>
        <begin position="57"/>
        <end position="68"/>
    </location>
</feature>
<feature type="turn" evidence="4">
    <location>
        <begin position="69"/>
        <end position="71"/>
    </location>
</feature>
<feature type="strand" evidence="4">
    <location>
        <begin position="74"/>
        <end position="76"/>
    </location>
</feature>
<feature type="helix" evidence="4">
    <location>
        <begin position="78"/>
        <end position="80"/>
    </location>
</feature>
<feature type="helix" evidence="4">
    <location>
        <begin position="86"/>
        <end position="88"/>
    </location>
</feature>
<feature type="helix" evidence="4">
    <location>
        <begin position="93"/>
        <end position="99"/>
    </location>
</feature>
<feature type="helix" evidence="4">
    <location>
        <begin position="101"/>
        <end position="109"/>
    </location>
</feature>
<feature type="helix" evidence="4">
    <location>
        <begin position="111"/>
        <end position="113"/>
    </location>
</feature>
<feature type="helix" evidence="4">
    <location>
        <begin position="122"/>
        <end position="139"/>
    </location>
</feature>
<feature type="turn" evidence="5">
    <location>
        <begin position="140"/>
        <end position="142"/>
    </location>
</feature>
<feature type="strand" evidence="4">
    <location>
        <begin position="143"/>
        <end position="149"/>
    </location>
</feature>
<feature type="helix" evidence="4">
    <location>
        <begin position="151"/>
        <end position="162"/>
    </location>
</feature>
<feature type="helix" evidence="4">
    <location>
        <begin position="166"/>
        <end position="171"/>
    </location>
</feature>
<feature type="strand" evidence="4">
    <location>
        <begin position="179"/>
        <end position="184"/>
    </location>
</feature>
<feature type="strand" evidence="4">
    <location>
        <begin position="189"/>
        <end position="196"/>
    </location>
</feature>
<feature type="helix" evidence="4">
    <location>
        <begin position="198"/>
        <end position="203"/>
    </location>
</feature>
<evidence type="ECO:0000250" key="1"/>
<evidence type="ECO:0000269" key="2">
    <source>
    </source>
</evidence>
<evidence type="ECO:0000305" key="3"/>
<evidence type="ECO:0007829" key="4">
    <source>
        <dbReference type="PDB" id="4IJ5"/>
    </source>
</evidence>
<evidence type="ECO:0007829" key="5">
    <source>
        <dbReference type="PDB" id="4IJ6"/>
    </source>
</evidence>
<protein>
    <recommendedName>
        <fullName>Phosphoserine phosphatase 1</fullName>
        <shortName>PSP 1</shortName>
        <shortName>PSPase 1</shortName>
        <ecNumber>3.1.3.3</ecNumber>
    </recommendedName>
    <alternativeName>
        <fullName>Metal-independent phosphoserine phosphatase 1</fullName>
        <shortName>iPSP1</shortName>
    </alternativeName>
    <alternativeName>
        <fullName>O-phosphoserine phosphohydrolase 1</fullName>
    </alternativeName>
</protein>
<organism>
    <name type="scientific">Hydrogenobacter thermophilus (strain DSM 6534 / IAM 12695 / TK-6)</name>
    <dbReference type="NCBI Taxonomy" id="608538"/>
    <lineage>
        <taxon>Bacteria</taxon>
        <taxon>Pseudomonadati</taxon>
        <taxon>Aquificota</taxon>
        <taxon>Aquificia</taxon>
        <taxon>Aquificales</taxon>
        <taxon>Aquificaceae</taxon>
        <taxon>Hydrogenobacter</taxon>
    </lineage>
</organism>
<reference key="1">
    <citation type="journal article" date="2010" name="J. Bacteriol.">
        <title>Complete genome sequence of the thermophilic, obligately chemolithoautotrophic hydrogen-oxidizing bacterium Hydrogenobacter thermophilus TK-6.</title>
        <authorList>
            <person name="Arai H."/>
            <person name="Kanbe H."/>
            <person name="Ishii M."/>
            <person name="Igarashi Y."/>
        </authorList>
    </citation>
    <scope>NUCLEOTIDE SEQUENCE [LARGE SCALE GENOMIC DNA]</scope>
    <source>
        <strain>DSM 6534 / IAM 12695 / TK-6</strain>
    </source>
</reference>
<reference key="2">
    <citation type="journal article" date="2011" name="Stand. Genomic Sci.">
        <title>Complete genome sequence of Hydrogenobacter thermophilus type strain (TK-6).</title>
        <authorList>
            <consortium name="US DOE Joint Genome Institute (JGI-PGF)"/>
            <person name="Zeytun A."/>
            <person name="Sikorski J."/>
            <person name="Nolan M."/>
            <person name="Lapidus A."/>
            <person name="Lucas S."/>
            <person name="Han J."/>
            <person name="Tice H."/>
            <person name="Cheng J.F."/>
            <person name="Tapia R."/>
            <person name="Goodwin L."/>
            <person name="Pitluck S."/>
            <person name="Liolios K."/>
            <person name="Ivanova N."/>
            <person name="Mavromatis K."/>
            <person name="Mikhailova N."/>
            <person name="Ovchinnikova G."/>
            <person name="Pati A."/>
            <person name="Chen A."/>
            <person name="Palaniappan K."/>
            <person name="Ngatchou-Djao O.D."/>
            <person name="Land M."/>
            <person name="Hauser L."/>
            <person name="Jeffries C.D."/>
            <person name="Han C."/>
            <person name="Detter J.C."/>
            <person name="Ubler S."/>
            <person name="Rohde M."/>
            <person name="Tindall B.J."/>
            <person name="Goker M."/>
            <person name="Wirth R."/>
            <person name="Woyke T."/>
            <person name="Bristow J."/>
            <person name="Eisen J.A."/>
            <person name="Markowitz V."/>
            <person name="Hugenholtz P."/>
            <person name="Klenk H.P."/>
            <person name="Kyrpides N.C."/>
        </authorList>
    </citation>
    <scope>NUCLEOTIDE SEQUENCE [LARGE SCALE GENOMIC DNA]</scope>
    <source>
        <strain>DSM 6534 / IAM 12695 / TK-6</strain>
    </source>
</reference>
<reference key="3">
    <citation type="journal article" date="2012" name="J. Biol. Chem.">
        <title>Discovery and analysis of cofactor-dependent phosphoglycerate mutase homologs as novel phosphoserine phosphatases in Hydrogenobacter thermophilus.</title>
        <authorList>
            <person name="Chiba Y."/>
            <person name="Oshima K."/>
            <person name="Arai H."/>
            <person name="Ishii M."/>
            <person name="Igarashi Y."/>
        </authorList>
    </citation>
    <scope>PROTEIN SEQUENCE OF 1-10</scope>
    <scope>FUNCTION AS A PHOSPHOSERINE PHOSPHATASE</scope>
    <scope>CATALYTIC ACTIVITY</scope>
    <scope>LACK OF PHOSPHOGLYCERATE MUTASE ACTIVITY</scope>
    <scope>SUBSTRATE SPECIFICITY</scope>
    <scope>GENE NAME</scope>
    <scope>ACTIVITY REGULATION</scope>
    <scope>PATHWAY</scope>
    <scope>SUBUNIT</scope>
    <source>
        <strain>DSM 6534 / IAM 12695 / TK-6</strain>
    </source>
</reference>
<sequence>MVKLILVRHAESEWNPVGRYQGLLDPDLSERGKKQAKLLAQELSREHLDVIYSSPLKRTYLTALEIAEAKNLEVIKEDRIIEIDHGMWSGMLVEEVMEKYPEDFRRWVEEPHKVEFQGGESLASVYNRVKGFLEEVRKRHWNQTVVVVSHTVPMRAMYCALLGVDLSKFWSFGCDNASYSVIHMEERRNVILKLNITCHLGEFYVEAHKAI</sequence>
<dbReference type="EC" id="3.1.3.3"/>
<dbReference type="EMBL" id="AP011112">
    <property type="protein sequence ID" value="BAI68570.1"/>
    <property type="molecule type" value="Genomic_DNA"/>
</dbReference>
<dbReference type="EMBL" id="CP002221">
    <property type="protein sequence ID" value="ADO44514.1"/>
    <property type="molecule type" value="Genomic_DNA"/>
</dbReference>
<dbReference type="RefSeq" id="WP_012962753.1">
    <property type="nucleotide sequence ID" value="NC_013799.1"/>
</dbReference>
<dbReference type="PDB" id="4IJ5">
    <property type="method" value="X-ray"/>
    <property type="resolution" value="1.50 A"/>
    <property type="chains" value="A/B=1-211"/>
</dbReference>
<dbReference type="PDB" id="4IJ6">
    <property type="method" value="X-ray"/>
    <property type="resolution" value="1.80 A"/>
    <property type="chains" value="A/B=1-211"/>
</dbReference>
<dbReference type="PDBsum" id="4IJ5"/>
<dbReference type="PDBsum" id="4IJ6"/>
<dbReference type="SMR" id="D3DFG8"/>
<dbReference type="STRING" id="608538.HTH_0103"/>
<dbReference type="KEGG" id="hte:Hydth_0104"/>
<dbReference type="KEGG" id="hth:HTH_0103"/>
<dbReference type="PATRIC" id="fig|608538.5.peg.105"/>
<dbReference type="eggNOG" id="COG0406">
    <property type="taxonomic scope" value="Bacteria"/>
</dbReference>
<dbReference type="HOGENOM" id="CLU_033323_8_4_0"/>
<dbReference type="OrthoDB" id="9781415at2"/>
<dbReference type="BRENDA" id="3.1.3.3">
    <property type="organism ID" value="2722"/>
</dbReference>
<dbReference type="UniPathway" id="UPA00135">
    <property type="reaction ID" value="UER00198"/>
</dbReference>
<dbReference type="EvolutionaryTrace" id="D3DFG8"/>
<dbReference type="Proteomes" id="UP000002574">
    <property type="component" value="Chromosome"/>
</dbReference>
<dbReference type="GO" id="GO:0005737">
    <property type="term" value="C:cytoplasm"/>
    <property type="evidence" value="ECO:0007669"/>
    <property type="project" value="TreeGrafter"/>
</dbReference>
<dbReference type="GO" id="GO:0036424">
    <property type="term" value="F:L-phosphoserine phosphatase activity"/>
    <property type="evidence" value="ECO:0007669"/>
    <property type="project" value="RHEA"/>
</dbReference>
<dbReference type="GO" id="GO:0006564">
    <property type="term" value="P:L-serine biosynthetic process"/>
    <property type="evidence" value="ECO:0007669"/>
    <property type="project" value="UniProtKB-KW"/>
</dbReference>
<dbReference type="CDD" id="cd07067">
    <property type="entry name" value="HP_PGM_like"/>
    <property type="match status" value="1"/>
</dbReference>
<dbReference type="Gene3D" id="3.40.50.1240">
    <property type="entry name" value="Phosphoglycerate mutase-like"/>
    <property type="match status" value="1"/>
</dbReference>
<dbReference type="InterPro" id="IPR013078">
    <property type="entry name" value="His_Pase_superF_clade-1"/>
</dbReference>
<dbReference type="InterPro" id="IPR029033">
    <property type="entry name" value="His_PPase_superfam"/>
</dbReference>
<dbReference type="InterPro" id="IPR050275">
    <property type="entry name" value="PGM_Phosphatase"/>
</dbReference>
<dbReference type="NCBIfam" id="NF045917">
    <property type="entry name" value="PhserinePhPspA"/>
    <property type="match status" value="1"/>
</dbReference>
<dbReference type="PANTHER" id="PTHR48100">
    <property type="entry name" value="BROAD-SPECIFICITY PHOSPHATASE YOR283W-RELATED"/>
    <property type="match status" value="1"/>
</dbReference>
<dbReference type="PANTHER" id="PTHR48100:SF1">
    <property type="entry name" value="HISTIDINE PHOSPHATASE FAMILY PROTEIN-RELATED"/>
    <property type="match status" value="1"/>
</dbReference>
<dbReference type="Pfam" id="PF00300">
    <property type="entry name" value="His_Phos_1"/>
    <property type="match status" value="1"/>
</dbReference>
<dbReference type="SMART" id="SM00855">
    <property type="entry name" value="PGAM"/>
    <property type="match status" value="1"/>
</dbReference>
<dbReference type="SUPFAM" id="SSF53254">
    <property type="entry name" value="Phosphoglycerate mutase-like"/>
    <property type="match status" value="1"/>
</dbReference>
<name>PSPA_HYDTT</name>
<accession>D3DFG8</accession>
<proteinExistence type="evidence at protein level"/>